<feature type="chain" id="PRO_0000195778" description="Xylose isomerase">
    <location>
        <begin position="1"/>
        <end position="433"/>
    </location>
</feature>
<feature type="active site" evidence="1">
    <location>
        <position position="97"/>
    </location>
</feature>
<feature type="active site" evidence="1">
    <location>
        <position position="100"/>
    </location>
</feature>
<feature type="binding site" evidence="1">
    <location>
        <position position="228"/>
    </location>
    <ligand>
        <name>Mg(2+)</name>
        <dbReference type="ChEBI" id="CHEBI:18420"/>
        <label>1</label>
    </ligand>
</feature>
<feature type="binding site" evidence="1">
    <location>
        <position position="264"/>
    </location>
    <ligand>
        <name>Mg(2+)</name>
        <dbReference type="ChEBI" id="CHEBI:18420"/>
        <label>1</label>
    </ligand>
</feature>
<feature type="binding site" evidence="1">
    <location>
        <position position="264"/>
    </location>
    <ligand>
        <name>Mg(2+)</name>
        <dbReference type="ChEBI" id="CHEBI:18420"/>
        <label>2</label>
    </ligand>
</feature>
<feature type="binding site" evidence="1">
    <location>
        <position position="267"/>
    </location>
    <ligand>
        <name>Mg(2+)</name>
        <dbReference type="ChEBI" id="CHEBI:18420"/>
        <label>2</label>
    </ligand>
</feature>
<feature type="binding site" evidence="1">
    <location>
        <position position="292"/>
    </location>
    <ligand>
        <name>Mg(2+)</name>
        <dbReference type="ChEBI" id="CHEBI:18420"/>
        <label>1</label>
    </ligand>
</feature>
<feature type="binding site" evidence="1">
    <location>
        <position position="303"/>
    </location>
    <ligand>
        <name>Mg(2+)</name>
        <dbReference type="ChEBI" id="CHEBI:18420"/>
        <label>2</label>
    </ligand>
</feature>
<feature type="binding site" evidence="1">
    <location>
        <position position="305"/>
    </location>
    <ligand>
        <name>Mg(2+)</name>
        <dbReference type="ChEBI" id="CHEBI:18420"/>
        <label>2</label>
    </ligand>
</feature>
<feature type="binding site" evidence="1">
    <location>
        <position position="334"/>
    </location>
    <ligand>
        <name>Mg(2+)</name>
        <dbReference type="ChEBI" id="CHEBI:18420"/>
        <label>1</label>
    </ligand>
</feature>
<dbReference type="EC" id="5.3.1.5" evidence="1"/>
<dbReference type="EMBL" id="AY431100">
    <property type="protein sequence ID" value="AAR07504.1"/>
    <property type="molecule type" value="Genomic_DNA"/>
</dbReference>
<dbReference type="SMR" id="Q6T6K9"/>
<dbReference type="GO" id="GO:0005737">
    <property type="term" value="C:cytoplasm"/>
    <property type="evidence" value="ECO:0007669"/>
    <property type="project" value="UniProtKB-SubCell"/>
</dbReference>
<dbReference type="GO" id="GO:0000287">
    <property type="term" value="F:magnesium ion binding"/>
    <property type="evidence" value="ECO:0007669"/>
    <property type="project" value="UniProtKB-UniRule"/>
</dbReference>
<dbReference type="GO" id="GO:0009045">
    <property type="term" value="F:xylose isomerase activity"/>
    <property type="evidence" value="ECO:0007669"/>
    <property type="project" value="UniProtKB-UniRule"/>
</dbReference>
<dbReference type="GO" id="GO:0042732">
    <property type="term" value="P:D-xylose metabolic process"/>
    <property type="evidence" value="ECO:0007669"/>
    <property type="project" value="UniProtKB-UniRule"/>
</dbReference>
<dbReference type="Gene3D" id="3.20.20.150">
    <property type="entry name" value="Divalent-metal-dependent TIM barrel enzymes"/>
    <property type="match status" value="1"/>
</dbReference>
<dbReference type="HAMAP" id="MF_00455">
    <property type="entry name" value="Xylose_isom_A"/>
    <property type="match status" value="1"/>
</dbReference>
<dbReference type="InterPro" id="IPR036237">
    <property type="entry name" value="Xyl_isomerase-like_sf"/>
</dbReference>
<dbReference type="InterPro" id="IPR013022">
    <property type="entry name" value="Xyl_isomerase-like_TIM-brl"/>
</dbReference>
<dbReference type="InterPro" id="IPR013452">
    <property type="entry name" value="Xylose_isom_bac"/>
</dbReference>
<dbReference type="InterPro" id="IPR001998">
    <property type="entry name" value="Xylose_isomerase"/>
</dbReference>
<dbReference type="NCBIfam" id="NF003998">
    <property type="entry name" value="PRK05474.1"/>
    <property type="match status" value="1"/>
</dbReference>
<dbReference type="NCBIfam" id="TIGR02630">
    <property type="entry name" value="xylose_isom_A"/>
    <property type="match status" value="1"/>
</dbReference>
<dbReference type="PANTHER" id="PTHR48408">
    <property type="match status" value="1"/>
</dbReference>
<dbReference type="PANTHER" id="PTHR48408:SF1">
    <property type="entry name" value="XYLOSE ISOMERASE"/>
    <property type="match status" value="1"/>
</dbReference>
<dbReference type="Pfam" id="PF01261">
    <property type="entry name" value="AP_endonuc_2"/>
    <property type="match status" value="1"/>
</dbReference>
<dbReference type="PRINTS" id="PR00688">
    <property type="entry name" value="XYLOSISMRASE"/>
</dbReference>
<dbReference type="SUPFAM" id="SSF51658">
    <property type="entry name" value="Xylose isomerase-like"/>
    <property type="match status" value="1"/>
</dbReference>
<dbReference type="PROSITE" id="PS51415">
    <property type="entry name" value="XYLOSE_ISOMERASE"/>
    <property type="match status" value="1"/>
</dbReference>
<gene>
    <name evidence="1" type="primary">xylA</name>
</gene>
<sequence length="433" mass="49696">MYFNVEKVVYEGPSSKNLLAYKFYNPEEEIAGKKMRDWFRFAVAYWHTFNSRGEDPFGSATFERPWFKKDPMDTAFAKVDALFEFCEKTGVEYFTFHDRDLAHEGLTLRESNKILDKVVEKIKEYMKSSNVKLLWGTANLFSHPRYAQGAATSPNPLVFSYAASQVKKMLDVTKELGGLGYVLWGGREGYDNLLLTDSALEEKLFARFLEMVVEYKERIGFNGVLMIEPKPKEPTKHQYDFDASTVLYFLKKHNLFEHFKLNIEANHATLAGHTFAHELRVARLNGKLGSIDANRGDLLLGWDTDQFPTDVYETTFAMYEVLENNGLDCGFNFDAKVRRASIDPEDIVYAHVSSMDAFALGLKLAVKLREKVKPMIEERYSEYNSEIGMKILEGKTTLDELSSYVEDLTDVRVKSLKQELLEMVINDVIFGGR</sequence>
<name>XYLA_FERGO</name>
<keyword id="KW-0119">Carbohydrate metabolism</keyword>
<keyword id="KW-0963">Cytoplasm</keyword>
<keyword id="KW-0413">Isomerase</keyword>
<keyword id="KW-0460">Magnesium</keyword>
<keyword id="KW-0479">Metal-binding</keyword>
<keyword id="KW-0859">Xylose metabolism</keyword>
<proteinExistence type="inferred from homology"/>
<comment type="catalytic activity">
    <reaction evidence="1">
        <text>alpha-D-xylose = alpha-D-xylulofuranose</text>
        <dbReference type="Rhea" id="RHEA:22816"/>
        <dbReference type="ChEBI" id="CHEBI:28518"/>
        <dbReference type="ChEBI" id="CHEBI:188998"/>
        <dbReference type="EC" id="5.3.1.5"/>
    </reaction>
</comment>
<comment type="cofactor">
    <cofactor evidence="1">
        <name>Mg(2+)</name>
        <dbReference type="ChEBI" id="CHEBI:18420"/>
    </cofactor>
    <text evidence="1">Binds 2 magnesium ions per subunit.</text>
</comment>
<comment type="subunit">
    <text evidence="1">Homotetramer.</text>
</comment>
<comment type="subcellular location">
    <subcellularLocation>
        <location evidence="1">Cytoplasm</location>
    </subcellularLocation>
</comment>
<comment type="similarity">
    <text evidence="1">Belongs to the xylose isomerase family.</text>
</comment>
<organism>
    <name type="scientific">Fervidobacterium gondwanense</name>
    <dbReference type="NCBI Taxonomy" id="44754"/>
    <lineage>
        <taxon>Bacteria</taxon>
        <taxon>Thermotogati</taxon>
        <taxon>Thermotogota</taxon>
        <taxon>Thermotogae</taxon>
        <taxon>Thermotogales</taxon>
        <taxon>Fervidobacteriaceae</taxon>
        <taxon>Fervidobacterium</taxon>
    </lineage>
</organism>
<protein>
    <recommendedName>
        <fullName evidence="1">Xylose isomerase</fullName>
        <ecNumber evidence="1">5.3.1.5</ecNumber>
    </recommendedName>
</protein>
<accession>Q6T6K9</accession>
<evidence type="ECO:0000255" key="1">
    <source>
        <dbReference type="HAMAP-Rule" id="MF_00455"/>
    </source>
</evidence>
<reference key="1">
    <citation type="submission" date="2003-10" db="EMBL/GenBank/DDBJ databases">
        <title>Isolation, expression and characterization of a glucose isomerase produced by the thermophilic bacterium Fervidobacterium gondwanense.</title>
        <authorList>
            <person name="Kluskens L."/>
            <person name="Geerling A.C.M."/>
            <person name="Zeilstra J."/>
            <person name="de Vos W.M."/>
            <person name="van der Oost J. IV"/>
        </authorList>
    </citation>
    <scope>NUCLEOTIDE SEQUENCE [GENOMIC DNA]</scope>
</reference>